<evidence type="ECO:0000250" key="1">
    <source>
        <dbReference type="UniProtKB" id="O54748"/>
    </source>
</evidence>
<evidence type="ECO:0000250" key="2">
    <source>
        <dbReference type="UniProtKB" id="Q13188"/>
    </source>
</evidence>
<evidence type="ECO:0000255" key="3"/>
<evidence type="ECO:0000255" key="4">
    <source>
        <dbReference type="PROSITE-ProRule" id="PRU00159"/>
    </source>
</evidence>
<evidence type="ECO:0000255" key="5">
    <source>
        <dbReference type="PROSITE-ProRule" id="PRU00310"/>
    </source>
</evidence>
<evidence type="ECO:0000256" key="6">
    <source>
        <dbReference type="SAM" id="MobiDB-lite"/>
    </source>
</evidence>
<evidence type="ECO:0000269" key="7">
    <source>
    </source>
</evidence>
<evidence type="ECO:0000269" key="8">
    <source>
    </source>
</evidence>
<evidence type="ECO:0000269" key="9">
    <source>
    </source>
</evidence>
<evidence type="ECO:0000269" key="10">
    <source>
    </source>
</evidence>
<evidence type="ECO:0000303" key="11">
    <source>
    </source>
</evidence>
<evidence type="ECO:0000305" key="12"/>
<evidence type="ECO:0007744" key="13">
    <source>
    </source>
</evidence>
<evidence type="ECO:0007744" key="14">
    <source>
    </source>
</evidence>
<evidence type="ECO:0007744" key="15">
    <source>
    </source>
</evidence>
<gene>
    <name type="primary">Stk3</name>
    <name type="synonym">Mess1</name>
    <name type="synonym">Mst2</name>
</gene>
<name>STK3_MOUSE</name>
<comment type="function">
    <text evidence="2 8">Stress-activated, pro-apoptotic kinase which, following caspase-cleavage, enters the nucleus and induces chromatin condensation followed by internucleosomal DNA fragmentation. Key component of the Hippo signaling pathway which plays a pivotal role in organ size control and tumor suppression by restricting proliferation and promoting apoptosis. The core of this pathway is composed of a kinase cascade wherein STK3/MST2 and STK4/MST1, in complex with its regulatory protein SAV1, phosphorylates and activates LATS1/2 in complex with its regulatory protein MOB1, which in turn phosphorylates and inactivates YAP1 oncoprotein and WWTR1/TAZ. Phosphorylation of YAP1 by LATS2 inhibits its translocation into the nucleus to regulate cellular genes important for cell proliferation, cell death, and cell migration. STK3/MST2 and STK4/MST1 are required to repress proliferation of mature hepatocytes, to prevent activation of facultative adult liver stem cells (oval cells), and to inhibit tumor formation. Phosphorylates NKX2-1. Phosphorylates NEK2 and plays a role in centrosome disjunction by regulating the localization of NEK2 to centrosomes, and its ability to phosphorylate CROCC and CEP250. In conjunction with SAV1, activates the transcriptional activity of ESR1 through the modulation of its phosphorylation. Positively regulates RAF1 activation via suppression of the inhibitory phosphorylation of RAF1 on 'Ser-259'. Phosphorylates MOBKL1A and RASSF2. Phosphorylates MOBKL1B on 'Thr-74'. Acts cooperatively with MOBKL1B to activate STK38 (By similarity).</text>
</comment>
<comment type="catalytic activity">
    <reaction evidence="2">
        <text>L-seryl-[protein] + ATP = O-phospho-L-seryl-[protein] + ADP + H(+)</text>
        <dbReference type="Rhea" id="RHEA:17989"/>
        <dbReference type="Rhea" id="RHEA-COMP:9863"/>
        <dbReference type="Rhea" id="RHEA-COMP:11604"/>
        <dbReference type="ChEBI" id="CHEBI:15378"/>
        <dbReference type="ChEBI" id="CHEBI:29999"/>
        <dbReference type="ChEBI" id="CHEBI:30616"/>
        <dbReference type="ChEBI" id="CHEBI:83421"/>
        <dbReference type="ChEBI" id="CHEBI:456216"/>
        <dbReference type="EC" id="2.7.11.1"/>
    </reaction>
    <physiologicalReaction direction="left-to-right" evidence="2">
        <dbReference type="Rhea" id="RHEA:17990"/>
    </physiologicalReaction>
</comment>
<comment type="catalytic activity">
    <reaction evidence="2">
        <text>L-threonyl-[protein] + ATP = O-phospho-L-threonyl-[protein] + ADP + H(+)</text>
        <dbReference type="Rhea" id="RHEA:46608"/>
        <dbReference type="Rhea" id="RHEA-COMP:11060"/>
        <dbReference type="Rhea" id="RHEA-COMP:11605"/>
        <dbReference type="ChEBI" id="CHEBI:15378"/>
        <dbReference type="ChEBI" id="CHEBI:30013"/>
        <dbReference type="ChEBI" id="CHEBI:30616"/>
        <dbReference type="ChEBI" id="CHEBI:61977"/>
        <dbReference type="ChEBI" id="CHEBI:456216"/>
        <dbReference type="EC" id="2.7.11.1"/>
    </reaction>
    <physiologicalReaction direction="left-to-right" evidence="2">
        <dbReference type="Rhea" id="RHEA:46609"/>
    </physiologicalReaction>
</comment>
<comment type="cofactor">
    <cofactor evidence="2">
        <name>Mg(2+)</name>
        <dbReference type="ChEBI" id="CHEBI:18420"/>
    </cofactor>
</comment>
<comment type="activity regulation">
    <text evidence="2">Inhibited by the C-terminal non-catalytic region. Activated by caspase-cleavage. Full activation also requires homodimerization and autophosphorylation of Thr-180, which are inhibited by the proto-oncogene product RAF1. Activated by RASSF1 which acts by preventing its dephosphorylation. When autophosphorylated at Thr-180, recruits STRIPAK complex and promotes PP2A-mediated dephosphorylation and inactivation of STK3.</text>
</comment>
<comment type="subunit">
    <text evidence="2 10">Homodimer; mediated via the coiled-coil region. Interacts with NORE1, which inhibits autoactivation (By similarity). Interacts with and stabilizes SAV1. Interacts with RAF1, which prevents dimerization and phosphorylation. Interacts with RASSF1. Interacts (via SARAH domain) with isoform 1 of NEK2. Interacts with ESR1 only in the presence of SAV1. Interacts with PKB/AKT1. Forms a tripartite complex with MOBKL1B and STK38. Interacts with RASSF2 (via SARAH domain). Interacts with DLG5 (via PDZ domain 3). Interacts with LATS1; this interaction is inhibited in the presence of DLG5 (PubMed:28087714). Interacts with MARK3 in the presence of DLG5. Interacts with RASSF5; this interaction inhibits STK3 autoactivation through heterodimerization. Interacts (when phosphorylated) with SLMAP (via FHA domain); the interaction associates STK3 with the STRIPAK complex (By similarity).</text>
</comment>
<comment type="subcellular location">
    <subcellularLocation>
        <location evidence="9">Cytoplasm</location>
    </subcellularLocation>
    <subcellularLocation>
        <location evidence="9">Nucleus</location>
    </subcellularLocation>
    <text evidence="2">The caspase-cleaved form cycles between nucleus and cytoplasm (By similarity). Phosphorylation at Thr-117 leads to inhibition of nuclear translocation (By similarity).</text>
</comment>
<comment type="alternative products">
    <event type="alternative splicing"/>
    <isoform>
        <id>Q9JI10-1</id>
        <name>1</name>
        <sequence type="displayed"/>
    </isoform>
    <isoform>
        <id>Q9JI10-2</id>
        <name>2</name>
        <sequence type="described" ref="VSP_020047"/>
    </isoform>
</comment>
<comment type="PTM">
    <text evidence="2">Autophosphorylated on two residues Thr-174 and Thr-180, leading to activation. Phosphorylation at Thr-117 and Thr-390 by PKB/AKT1, leads to inhibition of its: cleavage, kinase activity, autophosphorylation at Thr-180, binding to RASSF1 and nuclear translocation, and increase in its binding to RAF1. Phosphorylated at Ser-15 by PLK1, leading to activation.</text>
</comment>
<comment type="PTM">
    <text evidence="7">Proteolytically cleaved by caspase-3 during apoptosis. Proteolytic cleavage results in kinase activation and nuclear translocation of the truncated form (MST1/N).</text>
</comment>
<comment type="PTM">
    <text evidence="2">Ubiquitinated by TRIM69; leading to its redistribution to the perinuclear cytoskeleton.</text>
</comment>
<comment type="disruption phenotype">
    <text evidence="8">Mice show progressive hepatomegaly with a 2-fold increase in liver mass relative to total body mass at 1 month of age and a 3-fold increase by 3 months of age.</text>
</comment>
<comment type="similarity">
    <text evidence="12">Belongs to the protein kinase superfamily. STE Ser/Thr protein kinase family. STE20 subfamily.</text>
</comment>
<comment type="sequence caution" evidence="12">
    <conflict type="frameshift">
        <sequence resource="EMBL-CDS" id="AAA75300"/>
    </conflict>
</comment>
<feature type="chain" id="PRO_0000086690" description="Serine/threonine-protein kinase 3">
    <location>
        <begin position="1"/>
        <end position="497"/>
    </location>
</feature>
<feature type="chain" id="PRO_0000413715" description="Serine/threonine-protein kinase 3 36kDa subunit">
    <location>
        <begin position="1"/>
        <end position="322"/>
    </location>
</feature>
<feature type="chain" id="PRO_0000413716" description="Serine/threonine-protein kinase 3 20kDa subunit">
    <location>
        <begin position="323"/>
        <end position="497"/>
    </location>
</feature>
<feature type="domain" description="Protein kinase" evidence="4">
    <location>
        <begin position="27"/>
        <end position="278"/>
    </location>
</feature>
<feature type="domain" description="SARAH" evidence="5">
    <location>
        <begin position="443"/>
        <end position="490"/>
    </location>
</feature>
<feature type="region of interest" description="Disordered" evidence="6">
    <location>
        <begin position="1"/>
        <end position="20"/>
    </location>
</feature>
<feature type="region of interest" description="Disordered" evidence="6">
    <location>
        <begin position="301"/>
        <end position="343"/>
    </location>
</feature>
<feature type="region of interest" description="Disordered" evidence="6">
    <location>
        <begin position="368"/>
        <end position="394"/>
    </location>
</feature>
<feature type="coiled-coil region" evidence="3">
    <location>
        <begin position="287"/>
        <end position="328"/>
    </location>
</feature>
<feature type="coiled-coil region" evidence="3">
    <location>
        <begin position="366"/>
        <end position="387"/>
    </location>
</feature>
<feature type="coiled-coil region" evidence="3">
    <location>
        <begin position="448"/>
        <end position="479"/>
    </location>
</feature>
<feature type="compositionally biased region" description="Acidic residues" evidence="6">
    <location>
        <begin position="309"/>
        <end position="321"/>
    </location>
</feature>
<feature type="compositionally biased region" description="Polar residues" evidence="6">
    <location>
        <begin position="326"/>
        <end position="343"/>
    </location>
</feature>
<feature type="compositionally biased region" description="Acidic residues" evidence="6">
    <location>
        <begin position="369"/>
        <end position="382"/>
    </location>
</feature>
<feature type="active site" description="Proton acceptor" evidence="4">
    <location>
        <position position="146"/>
    </location>
</feature>
<feature type="binding site" evidence="4">
    <location>
        <begin position="33"/>
        <end position="41"/>
    </location>
    <ligand>
        <name>ATP</name>
        <dbReference type="ChEBI" id="CHEBI:30616"/>
    </ligand>
</feature>
<feature type="binding site" evidence="4">
    <location>
        <position position="56"/>
    </location>
    <ligand>
        <name>ATP</name>
        <dbReference type="ChEBI" id="CHEBI:30616"/>
    </ligand>
</feature>
<feature type="binding site" evidence="2">
    <location>
        <position position="151"/>
    </location>
    <ligand>
        <name>Mg(2+)</name>
        <dbReference type="ChEBI" id="CHEBI:18420"/>
    </ligand>
</feature>
<feature type="binding site" evidence="2">
    <location>
        <position position="164"/>
    </location>
    <ligand>
        <name>Mg(2+)</name>
        <dbReference type="ChEBI" id="CHEBI:18420"/>
    </ligand>
</feature>
<feature type="site" description="Cleavage; by caspase-3">
    <location>
        <begin position="322"/>
        <end position="323"/>
    </location>
</feature>
<feature type="modified residue" description="N-acetylmethionine" evidence="2">
    <location>
        <position position="1"/>
    </location>
</feature>
<feature type="modified residue" description="Phosphoserine" evidence="15">
    <location>
        <position position="15"/>
    </location>
</feature>
<feature type="modified residue" description="Phosphothreonine; by PKB/AKT1" evidence="2">
    <location>
        <position position="117"/>
    </location>
</feature>
<feature type="modified residue" description="Phosphothreonine; by autocatalysis" evidence="1">
    <location>
        <position position="180"/>
    </location>
</feature>
<feature type="modified residue" description="Phosphoserine" evidence="13 14 15">
    <location>
        <position position="316"/>
    </location>
</feature>
<feature type="modified residue" description="Phosphothreonine" evidence="2">
    <location>
        <position position="336"/>
    </location>
</feature>
<feature type="modified residue" description="Phosphothreonine" evidence="2">
    <location>
        <position position="384"/>
    </location>
</feature>
<feature type="modified residue" description="Phosphothreonine; by PKB/AKT1" evidence="2">
    <location>
        <position position="390"/>
    </location>
</feature>
<feature type="modified residue" description="Phosphoserine" evidence="15">
    <location>
        <position position="391"/>
    </location>
</feature>
<feature type="modified residue" description="Phosphoserine" evidence="2">
    <location>
        <position position="450"/>
    </location>
</feature>
<feature type="splice variant" id="VSP_020047" description="In isoform 2." evidence="11">
    <location>
        <begin position="9"/>
        <end position="78"/>
    </location>
</feature>
<organism>
    <name type="scientific">Mus musculus</name>
    <name type="common">Mouse</name>
    <dbReference type="NCBI Taxonomy" id="10090"/>
    <lineage>
        <taxon>Eukaryota</taxon>
        <taxon>Metazoa</taxon>
        <taxon>Chordata</taxon>
        <taxon>Craniata</taxon>
        <taxon>Vertebrata</taxon>
        <taxon>Euteleostomi</taxon>
        <taxon>Mammalia</taxon>
        <taxon>Eutheria</taxon>
        <taxon>Euarchontoglires</taxon>
        <taxon>Glires</taxon>
        <taxon>Rodentia</taxon>
        <taxon>Myomorpha</taxon>
        <taxon>Muroidea</taxon>
        <taxon>Muridae</taxon>
        <taxon>Murinae</taxon>
        <taxon>Mus</taxon>
        <taxon>Mus</taxon>
    </lineage>
</organism>
<sequence length="497" mass="56855">MEQPPASKSKLKKLSEDSLTKQPEEVFDVLEKLGEGSYGSVFKAIHKESGQVVAIKQVPVESDLQEIIKEISIMQQCDSPYVVKYYGSYFKNTDLWIVMEYCGAGSVSDIIRLRNKTLTEDEIATILKSTLKGLEYLHFMRKIHRDIKAGNILLNTEGHAKLADFGVAGQLTDTMAKRNTVIGTPFWMAPEVIQEIGYNCVADIWSLGITSIEMAEGKPPYADIHPMRAIFMIPTNPPPTFRKPELWSDDFTDFVKKCLVKSPEQRATATQLLQHPFIKNAKPVSILRDLIAEAMEIKAKRHEEQQRELEEEEENSDEDELDSHTMVKTSSESVGTMRATSTMSEGAQTMIEHNSTMLESDLGTMVINSEEEEEEEEEEEEDGTMKRNATSPQVQRPSFMDYFDKQDFKNKSHENCDQSMREPGPMSNSVFPDNWRVPQDGDFDFLKNLSLEELQMRLKALDPMMEREIEELHQRYSAKRQPILDAMDAKKRRQQNF</sequence>
<dbReference type="EC" id="2.7.11.1"/>
<dbReference type="EMBL" id="AF271361">
    <property type="protein sequence ID" value="AAF75790.1"/>
    <property type="molecule type" value="mRNA"/>
</dbReference>
<dbReference type="EMBL" id="U28726">
    <property type="protein sequence ID" value="AAA75300.1"/>
    <property type="status" value="ALT_FRAME"/>
    <property type="molecule type" value="mRNA"/>
</dbReference>
<dbReference type="EMBL" id="AY058922">
    <property type="protein sequence ID" value="AAL29682.1"/>
    <property type="molecule type" value="mRNA"/>
</dbReference>
<dbReference type="EMBL" id="BC037440">
    <property type="protein sequence ID" value="AAH37440.1"/>
    <property type="molecule type" value="mRNA"/>
</dbReference>
<dbReference type="EMBL" id="BC049123">
    <property type="protein sequence ID" value="AAH49123.2"/>
    <property type="molecule type" value="mRNA"/>
</dbReference>
<dbReference type="CCDS" id="CCDS37059.1">
    <molecule id="Q9JI10-1"/>
</dbReference>
<dbReference type="RefSeq" id="NP_062609.2">
    <molecule id="Q9JI10-1"/>
    <property type="nucleotide sequence ID" value="NM_019635.2"/>
</dbReference>
<dbReference type="SMR" id="Q9JI10"/>
<dbReference type="BioGRID" id="207869">
    <property type="interactions" value="3"/>
</dbReference>
<dbReference type="DIP" id="DIP-61760N"/>
<dbReference type="FunCoup" id="Q9JI10">
    <property type="interactions" value="2880"/>
</dbReference>
<dbReference type="IntAct" id="Q9JI10">
    <property type="interactions" value="4"/>
</dbReference>
<dbReference type="MINT" id="Q9JI10"/>
<dbReference type="STRING" id="10090.ENSMUSP00000018476"/>
<dbReference type="BindingDB" id="Q9JI10"/>
<dbReference type="ChEMBL" id="CHEMBL4310"/>
<dbReference type="DrugCentral" id="Q9JI10"/>
<dbReference type="GlyGen" id="Q9JI10">
    <property type="glycosylation" value="1 site, 1 O-linked glycan (1 site)"/>
</dbReference>
<dbReference type="iPTMnet" id="Q9JI10"/>
<dbReference type="PhosphoSitePlus" id="Q9JI10"/>
<dbReference type="SwissPalm" id="Q9JI10"/>
<dbReference type="jPOST" id="Q9JI10"/>
<dbReference type="PaxDb" id="10090-ENSMUSP00000018476"/>
<dbReference type="PeptideAtlas" id="Q9JI10"/>
<dbReference type="ProteomicsDB" id="254590">
    <molecule id="Q9JI10-1"/>
</dbReference>
<dbReference type="ProteomicsDB" id="254591">
    <molecule id="Q9JI10-2"/>
</dbReference>
<dbReference type="Pumba" id="Q9JI10"/>
<dbReference type="Antibodypedia" id="26075">
    <property type="antibodies" value="496 antibodies from 41 providers"/>
</dbReference>
<dbReference type="DNASU" id="56274"/>
<dbReference type="Ensembl" id="ENSMUST00000018476.14">
    <molecule id="Q9JI10-1"/>
    <property type="protein sequence ID" value="ENSMUSP00000018476.8"/>
    <property type="gene ID" value="ENSMUSG00000022329.16"/>
</dbReference>
<dbReference type="Ensembl" id="ENSMUST00000067033.8">
    <molecule id="Q9JI10-2"/>
    <property type="protein sequence ID" value="ENSMUSP00000064225.8"/>
    <property type="gene ID" value="ENSMUSG00000022329.16"/>
</dbReference>
<dbReference type="GeneID" id="56274"/>
<dbReference type="KEGG" id="mmu:56274"/>
<dbReference type="UCSC" id="uc007vlz.1">
    <molecule id="Q9JI10-1"/>
    <property type="organism name" value="mouse"/>
</dbReference>
<dbReference type="UCSC" id="uc011zrz.1">
    <molecule id="Q9JI10-2"/>
    <property type="organism name" value="mouse"/>
</dbReference>
<dbReference type="AGR" id="MGI:1928487"/>
<dbReference type="CTD" id="6788"/>
<dbReference type="MGI" id="MGI:1928487">
    <property type="gene designation" value="Stk3"/>
</dbReference>
<dbReference type="VEuPathDB" id="HostDB:ENSMUSG00000022329"/>
<dbReference type="eggNOG" id="KOG0574">
    <property type="taxonomic scope" value="Eukaryota"/>
</dbReference>
<dbReference type="GeneTree" id="ENSGT00940000154984"/>
<dbReference type="HOGENOM" id="CLU_000288_63_23_1"/>
<dbReference type="InParanoid" id="Q9JI10"/>
<dbReference type="OMA" id="LNQISHP"/>
<dbReference type="OrthoDB" id="8693905at2759"/>
<dbReference type="PhylomeDB" id="Q9JI10"/>
<dbReference type="TreeFam" id="TF354217"/>
<dbReference type="Reactome" id="R-MMU-2028269">
    <property type="pathway name" value="Signaling by Hippo"/>
</dbReference>
<dbReference type="BioGRID-ORCS" id="56274">
    <property type="hits" value="3 hits in 82 CRISPR screens"/>
</dbReference>
<dbReference type="ChiTaRS" id="Stk3">
    <property type="organism name" value="mouse"/>
</dbReference>
<dbReference type="PRO" id="PR:Q9JI10"/>
<dbReference type="Proteomes" id="UP000000589">
    <property type="component" value="Chromosome 15"/>
</dbReference>
<dbReference type="RNAct" id="Q9JI10">
    <property type="molecule type" value="protein"/>
</dbReference>
<dbReference type="Bgee" id="ENSMUSG00000022329">
    <property type="expression patterns" value="Expressed in embryonic post-anal tail and 253 other cell types or tissues"/>
</dbReference>
<dbReference type="ExpressionAtlas" id="Q9JI10">
    <property type="expression patterns" value="baseline and differential"/>
</dbReference>
<dbReference type="GO" id="GO:0005813">
    <property type="term" value="C:centrosome"/>
    <property type="evidence" value="ECO:0007669"/>
    <property type="project" value="Ensembl"/>
</dbReference>
<dbReference type="GO" id="GO:0005737">
    <property type="term" value="C:cytoplasm"/>
    <property type="evidence" value="ECO:0000314"/>
    <property type="project" value="MGI"/>
</dbReference>
<dbReference type="GO" id="GO:0005634">
    <property type="term" value="C:nucleus"/>
    <property type="evidence" value="ECO:0000250"/>
    <property type="project" value="UniProtKB"/>
</dbReference>
<dbReference type="GO" id="GO:0032991">
    <property type="term" value="C:protein-containing complex"/>
    <property type="evidence" value="ECO:0000266"/>
    <property type="project" value="MGI"/>
</dbReference>
<dbReference type="GO" id="GO:0005524">
    <property type="term" value="F:ATP binding"/>
    <property type="evidence" value="ECO:0000250"/>
    <property type="project" value="UniProtKB"/>
</dbReference>
<dbReference type="GO" id="GO:0042802">
    <property type="term" value="F:identical protein binding"/>
    <property type="evidence" value="ECO:0007669"/>
    <property type="project" value="Ensembl"/>
</dbReference>
<dbReference type="GO" id="GO:0000287">
    <property type="term" value="F:magnesium ion binding"/>
    <property type="evidence" value="ECO:0000250"/>
    <property type="project" value="UniProtKB"/>
</dbReference>
<dbReference type="GO" id="GO:0004672">
    <property type="term" value="F:protein kinase activity"/>
    <property type="evidence" value="ECO:0000250"/>
    <property type="project" value="UniProtKB"/>
</dbReference>
<dbReference type="GO" id="GO:0106310">
    <property type="term" value="F:protein serine kinase activity"/>
    <property type="evidence" value="ECO:0007669"/>
    <property type="project" value="RHEA"/>
</dbReference>
<dbReference type="GO" id="GO:0004674">
    <property type="term" value="F:protein serine/threonine kinase activity"/>
    <property type="evidence" value="ECO:0000250"/>
    <property type="project" value="UniProtKB"/>
</dbReference>
<dbReference type="GO" id="GO:0140537">
    <property type="term" value="F:transcription regulator activator activity"/>
    <property type="evidence" value="ECO:0000266"/>
    <property type="project" value="MGI"/>
</dbReference>
<dbReference type="GO" id="GO:0006915">
    <property type="term" value="P:apoptotic process"/>
    <property type="evidence" value="ECO:0000316"/>
    <property type="project" value="MGI"/>
</dbReference>
<dbReference type="GO" id="GO:0060070">
    <property type="term" value="P:canonical Wnt signaling pathway"/>
    <property type="evidence" value="ECO:0000316"/>
    <property type="project" value="MGI"/>
</dbReference>
<dbReference type="GO" id="GO:0060706">
    <property type="term" value="P:cell differentiation involved in embryonic placenta development"/>
    <property type="evidence" value="ECO:0000316"/>
    <property type="project" value="MGI"/>
</dbReference>
<dbReference type="GO" id="GO:0008283">
    <property type="term" value="P:cell population proliferation"/>
    <property type="evidence" value="ECO:0000316"/>
    <property type="project" value="MGI"/>
</dbReference>
<dbReference type="GO" id="GO:0007417">
    <property type="term" value="P:central nervous system development"/>
    <property type="evidence" value="ECO:0000316"/>
    <property type="project" value="MGI"/>
</dbReference>
<dbReference type="GO" id="GO:0003157">
    <property type="term" value="P:endocardium development"/>
    <property type="evidence" value="ECO:0000316"/>
    <property type="project" value="MGI"/>
</dbReference>
<dbReference type="GO" id="GO:0050673">
    <property type="term" value="P:epithelial cell proliferation"/>
    <property type="evidence" value="ECO:0000316"/>
    <property type="project" value="MGI"/>
</dbReference>
<dbReference type="GO" id="GO:0008625">
    <property type="term" value="P:extrinsic apoptotic signaling pathway via death domain receptors"/>
    <property type="evidence" value="ECO:0000316"/>
    <property type="project" value="MGI"/>
</dbReference>
<dbReference type="GO" id="GO:0097284">
    <property type="term" value="P:hepatocyte apoptotic process"/>
    <property type="evidence" value="ECO:0000316"/>
    <property type="project" value="MGI"/>
</dbReference>
<dbReference type="GO" id="GO:0035329">
    <property type="term" value="P:hippo signaling"/>
    <property type="evidence" value="ECO:0000315"/>
    <property type="project" value="UniProtKB"/>
</dbReference>
<dbReference type="GO" id="GO:0035556">
    <property type="term" value="P:intracellular signal transduction"/>
    <property type="evidence" value="ECO:0000250"/>
    <property type="project" value="UniProtKB"/>
</dbReference>
<dbReference type="GO" id="GO:0007254">
    <property type="term" value="P:JNK cascade"/>
    <property type="evidence" value="ECO:0000316"/>
    <property type="project" value="MGI"/>
</dbReference>
<dbReference type="GO" id="GO:0090090">
    <property type="term" value="P:negative regulation of canonical Wnt signaling pathway"/>
    <property type="evidence" value="ECO:0000316"/>
    <property type="project" value="MGI"/>
</dbReference>
<dbReference type="GO" id="GO:0008285">
    <property type="term" value="P:negative regulation of cell population proliferation"/>
    <property type="evidence" value="ECO:0000316"/>
    <property type="project" value="MGI"/>
</dbReference>
<dbReference type="GO" id="GO:0050680">
    <property type="term" value="P:negative regulation of epithelial cell proliferation"/>
    <property type="evidence" value="ECO:0000316"/>
    <property type="project" value="MGI"/>
</dbReference>
<dbReference type="GO" id="GO:0046621">
    <property type="term" value="P:negative regulation of organ growth"/>
    <property type="evidence" value="ECO:0000316"/>
    <property type="project" value="MGI"/>
</dbReference>
<dbReference type="GO" id="GO:0001841">
    <property type="term" value="P:neural tube formation"/>
    <property type="evidence" value="ECO:0000316"/>
    <property type="project" value="MGI"/>
</dbReference>
<dbReference type="GO" id="GO:0035265">
    <property type="term" value="P:organ growth"/>
    <property type="evidence" value="ECO:0000316"/>
    <property type="project" value="MGI"/>
</dbReference>
<dbReference type="GO" id="GO:0043491">
    <property type="term" value="P:phosphatidylinositol 3-kinase/protein kinase B signal transduction"/>
    <property type="evidence" value="ECO:0000316"/>
    <property type="project" value="MGI"/>
</dbReference>
<dbReference type="GO" id="GO:0043065">
    <property type="term" value="P:positive regulation of apoptotic process"/>
    <property type="evidence" value="ECO:0000316"/>
    <property type="project" value="MGI"/>
</dbReference>
<dbReference type="GO" id="GO:1902043">
    <property type="term" value="P:positive regulation of extrinsic apoptotic signaling pathway via death domain receptors"/>
    <property type="evidence" value="ECO:0000316"/>
    <property type="project" value="MGI"/>
</dbReference>
<dbReference type="GO" id="GO:0045600">
    <property type="term" value="P:positive regulation of fat cell differentiation"/>
    <property type="evidence" value="ECO:0000316"/>
    <property type="project" value="MGI"/>
</dbReference>
<dbReference type="GO" id="GO:0035332">
    <property type="term" value="P:positive regulation of hippo signaling"/>
    <property type="evidence" value="ECO:0000266"/>
    <property type="project" value="MGI"/>
</dbReference>
<dbReference type="GO" id="GO:0046330">
    <property type="term" value="P:positive regulation of JNK cascade"/>
    <property type="evidence" value="ECO:0000316"/>
    <property type="project" value="MGI"/>
</dbReference>
<dbReference type="GO" id="GO:0051897">
    <property type="term" value="P:positive regulation of phosphatidylinositol 3-kinase/protein kinase B signal transduction"/>
    <property type="evidence" value="ECO:0000316"/>
    <property type="project" value="MGI"/>
</dbReference>
<dbReference type="GO" id="GO:0060215">
    <property type="term" value="P:primitive hemopoiesis"/>
    <property type="evidence" value="ECO:0000316"/>
    <property type="project" value="MGI"/>
</dbReference>
<dbReference type="GO" id="GO:0006606">
    <property type="term" value="P:protein import into nucleus"/>
    <property type="evidence" value="ECO:0007669"/>
    <property type="project" value="Ensembl"/>
</dbReference>
<dbReference type="GO" id="GO:0071539">
    <property type="term" value="P:protein localization to centrosome"/>
    <property type="evidence" value="ECO:0007669"/>
    <property type="project" value="Ensembl"/>
</dbReference>
<dbReference type="GO" id="GO:0050821">
    <property type="term" value="P:protein stabilization"/>
    <property type="evidence" value="ECO:0000266"/>
    <property type="project" value="MGI"/>
</dbReference>
<dbReference type="GO" id="GO:0051262">
    <property type="term" value="P:protein tetramerization"/>
    <property type="evidence" value="ECO:0007669"/>
    <property type="project" value="InterPro"/>
</dbReference>
<dbReference type="GO" id="GO:0060800">
    <property type="term" value="P:regulation of cell differentiation involved in embryonic placenta development"/>
    <property type="evidence" value="ECO:0000316"/>
    <property type="project" value="MGI"/>
</dbReference>
<dbReference type="CDD" id="cd21884">
    <property type="entry name" value="SARAH_MST_Hpo"/>
    <property type="match status" value="1"/>
</dbReference>
<dbReference type="CDD" id="cd06612">
    <property type="entry name" value="STKc_MST1_2"/>
    <property type="match status" value="1"/>
</dbReference>
<dbReference type="FunFam" id="1.10.287.4270:FF:000001">
    <property type="entry name" value="Serine/threonine-protein kinase 3"/>
    <property type="match status" value="1"/>
</dbReference>
<dbReference type="FunFam" id="1.10.510.10:FF:000075">
    <property type="entry name" value="Serine/threonine-protein kinase 3"/>
    <property type="match status" value="1"/>
</dbReference>
<dbReference type="FunFam" id="3.30.200.20:FF:000410">
    <property type="entry name" value="Serine/threonine-protein kinase 3"/>
    <property type="match status" value="1"/>
</dbReference>
<dbReference type="FunFam" id="4.10.170.10:FF:000002">
    <property type="entry name" value="serine/threonine-protein kinase 3"/>
    <property type="match status" value="1"/>
</dbReference>
<dbReference type="Gene3D" id="1.10.287.4270">
    <property type="match status" value="1"/>
</dbReference>
<dbReference type="Gene3D" id="4.10.170.10">
    <property type="entry name" value="p53-like tetramerisation domain"/>
    <property type="match status" value="1"/>
</dbReference>
<dbReference type="Gene3D" id="1.10.510.10">
    <property type="entry name" value="Transferase(Phosphotransferase) domain 1"/>
    <property type="match status" value="1"/>
</dbReference>
<dbReference type="InterPro" id="IPR011009">
    <property type="entry name" value="Kinase-like_dom_sf"/>
</dbReference>
<dbReference type="InterPro" id="IPR024205">
    <property type="entry name" value="Mst1_2_SARAH_domain"/>
</dbReference>
<dbReference type="InterPro" id="IPR036674">
    <property type="entry name" value="p53_tetramer_sf"/>
</dbReference>
<dbReference type="InterPro" id="IPR000719">
    <property type="entry name" value="Prot_kinase_dom"/>
</dbReference>
<dbReference type="InterPro" id="IPR017441">
    <property type="entry name" value="Protein_kinase_ATP_BS"/>
</dbReference>
<dbReference type="InterPro" id="IPR011524">
    <property type="entry name" value="SARAH_dom"/>
</dbReference>
<dbReference type="InterPro" id="IPR050629">
    <property type="entry name" value="STE20/SPS1-PAK"/>
</dbReference>
<dbReference type="PANTHER" id="PTHR48012:SF2">
    <property type="entry name" value="STERILE20-LIKE KINASE, ISOFORM B"/>
    <property type="match status" value="1"/>
</dbReference>
<dbReference type="PANTHER" id="PTHR48012">
    <property type="entry name" value="STERILE20-LIKE KINASE, ISOFORM B-RELATED"/>
    <property type="match status" value="1"/>
</dbReference>
<dbReference type="Pfam" id="PF11629">
    <property type="entry name" value="Mst1_SARAH"/>
    <property type="match status" value="1"/>
</dbReference>
<dbReference type="Pfam" id="PF00069">
    <property type="entry name" value="Pkinase"/>
    <property type="match status" value="1"/>
</dbReference>
<dbReference type="SMART" id="SM00220">
    <property type="entry name" value="S_TKc"/>
    <property type="match status" value="1"/>
</dbReference>
<dbReference type="SUPFAM" id="SSF56112">
    <property type="entry name" value="Protein kinase-like (PK-like)"/>
    <property type="match status" value="1"/>
</dbReference>
<dbReference type="PROSITE" id="PS00107">
    <property type="entry name" value="PROTEIN_KINASE_ATP"/>
    <property type="match status" value="1"/>
</dbReference>
<dbReference type="PROSITE" id="PS50011">
    <property type="entry name" value="PROTEIN_KINASE_DOM"/>
    <property type="match status" value="1"/>
</dbReference>
<dbReference type="PROSITE" id="PS50951">
    <property type="entry name" value="SARAH"/>
    <property type="match status" value="1"/>
</dbReference>
<proteinExistence type="evidence at protein level"/>
<accession>Q9JI10</accession>
<accession>Q60877</accession>
<accession>Q80UG4</accession>
<accession>Q8CI58</accession>
<keyword id="KW-0007">Acetylation</keyword>
<keyword id="KW-0025">Alternative splicing</keyword>
<keyword id="KW-0053">Apoptosis</keyword>
<keyword id="KW-0067">ATP-binding</keyword>
<keyword id="KW-0175">Coiled coil</keyword>
<keyword id="KW-0963">Cytoplasm</keyword>
<keyword id="KW-0418">Kinase</keyword>
<keyword id="KW-0460">Magnesium</keyword>
<keyword id="KW-0479">Metal-binding</keyword>
<keyword id="KW-0547">Nucleotide-binding</keyword>
<keyword id="KW-0539">Nucleus</keyword>
<keyword id="KW-0597">Phosphoprotein</keyword>
<keyword id="KW-1185">Reference proteome</keyword>
<keyword id="KW-0723">Serine/threonine-protein kinase</keyword>
<keyword id="KW-0808">Transferase</keyword>
<keyword id="KW-0832">Ubl conjugation</keyword>
<protein>
    <recommendedName>
        <fullName>Serine/threonine-protein kinase 3</fullName>
        <ecNumber>2.7.11.1</ecNumber>
    </recommendedName>
    <alternativeName>
        <fullName>Mammalian STE20-like protein kinase 2</fullName>
        <shortName>MST-2</shortName>
    </alternativeName>
    <alternativeName>
        <fullName>STE20-like kinase MST2</fullName>
    </alternativeName>
    <component>
        <recommendedName>
            <fullName>Serine/threonine-protein kinase 3 36kDa subunit</fullName>
            <shortName>MST2/N</shortName>
        </recommendedName>
    </component>
    <component>
        <recommendedName>
            <fullName>Serine/threonine-protein kinase 3 20kDa subunit</fullName>
            <shortName>MST2/C</shortName>
        </recommendedName>
    </component>
</protein>
<reference key="1">
    <citation type="journal article" date="2001" name="J. Biol. Chem.">
        <title>MST, a physiological caspase substrate, highly sensitizes apoptosis both upstream and downstream of caspase activation.</title>
        <authorList>
            <person name="Lee K.-K."/>
            <person name="Ohyama T."/>
            <person name="Yajima N."/>
            <person name="Tsubuki S."/>
            <person name="Yonehara S."/>
        </authorList>
    </citation>
    <scope>NUCLEOTIDE SEQUENCE [MRNA] (ISOFORM 1)</scope>
    <scope>PROTEOLYTIC PROCESSING</scope>
    <source>
        <strain>BALB/cJ</strain>
    </source>
</reference>
<reference key="2">
    <citation type="submission" date="1995-06" db="EMBL/GenBank/DDBJ databases">
        <authorList>
            <person name="Han J."/>
        </authorList>
    </citation>
    <scope>NUCLEOTIDE SEQUENCE [MRNA] (ISOFORM 1)</scope>
    <source>
        <tissue>Liver</tissue>
    </source>
</reference>
<reference key="3">
    <citation type="submission" date="2001-10" db="EMBL/GenBank/DDBJ databases">
        <title>Molecular cloning and characterization of mouse MST2 kinase from olfactory receptor neurons.</title>
        <authorList>
            <person name="de las Heras R."/>
            <person name="Mackay-Sim A."/>
            <person name="Bushell G.R."/>
        </authorList>
    </citation>
    <scope>NUCLEOTIDE SEQUENCE [MRNA] (ISOFORM 1)</scope>
    <source>
        <tissue>Olfactory epithelium</tissue>
    </source>
</reference>
<reference key="4">
    <citation type="journal article" date="2004" name="Genome Res.">
        <title>The status, quality, and expansion of the NIH full-length cDNA project: the Mammalian Gene Collection (MGC).</title>
        <authorList>
            <consortium name="The MGC Project Team"/>
        </authorList>
    </citation>
    <scope>NUCLEOTIDE SEQUENCE [LARGE SCALE MRNA] (ISOFORMS 1 AND 2)</scope>
    <source>
        <strain>C57BL/6J</strain>
        <strain>FVB/N</strain>
        <tissue>Brain</tissue>
        <tissue>Mammary gland</tissue>
    </source>
</reference>
<reference key="5">
    <citation type="journal article" date="2007" name="Proc. Natl. Acad. Sci. U.S.A.">
        <title>Large-scale phosphorylation analysis of mouse liver.</title>
        <authorList>
            <person name="Villen J."/>
            <person name="Beausoleil S.A."/>
            <person name="Gerber S.A."/>
            <person name="Gygi S.P."/>
        </authorList>
    </citation>
    <scope>PHOSPHORYLATION [LARGE SCALE ANALYSIS] AT SER-316</scope>
    <scope>IDENTIFICATION BY MASS SPECTROMETRY [LARGE SCALE ANALYSIS]</scope>
    <source>
        <tissue>Liver</tissue>
    </source>
</reference>
<reference key="6">
    <citation type="journal article" date="2009" name="Immunity">
        <title>The phagosomal proteome in interferon-gamma-activated macrophages.</title>
        <authorList>
            <person name="Trost M."/>
            <person name="English L."/>
            <person name="Lemieux S."/>
            <person name="Courcelles M."/>
            <person name="Desjardins M."/>
            <person name="Thibault P."/>
        </authorList>
    </citation>
    <scope>PHOSPHORYLATION [LARGE SCALE ANALYSIS] AT SER-316</scope>
    <scope>IDENTIFICATION BY MASS SPECTROMETRY [LARGE SCALE ANALYSIS]</scope>
</reference>
<reference key="7">
    <citation type="journal article" date="2009" name="Mol. Cell. Proteomics">
        <title>Large scale localization of protein phosphorylation by use of electron capture dissociation mass spectrometry.</title>
        <authorList>
            <person name="Sweet S.M."/>
            <person name="Bailey C.M."/>
            <person name="Cunningham D.L."/>
            <person name="Heath J.K."/>
            <person name="Cooper H.J."/>
        </authorList>
    </citation>
    <scope>IDENTIFICATION BY MASS SPECTROMETRY [LARGE SCALE ANALYSIS]</scope>
    <source>
        <tissue>Embryonic fibroblast</tissue>
    </source>
</reference>
<reference key="8">
    <citation type="journal article" date="2010" name="Cell">
        <title>A tissue-specific atlas of mouse protein phosphorylation and expression.</title>
        <authorList>
            <person name="Huttlin E.L."/>
            <person name="Jedrychowski M.P."/>
            <person name="Elias J.E."/>
            <person name="Goswami T."/>
            <person name="Rad R."/>
            <person name="Beausoleil S.A."/>
            <person name="Villen J."/>
            <person name="Haas W."/>
            <person name="Sowa M.E."/>
            <person name="Gygi S.P."/>
        </authorList>
    </citation>
    <scope>PHOSPHORYLATION [LARGE SCALE ANALYSIS] AT SER-15; SER-316 AND SER-391</scope>
    <scope>IDENTIFICATION BY MASS SPECTROMETRY [LARGE SCALE ANALYSIS]</scope>
    <source>
        <tissue>Brain</tissue>
        <tissue>Brown adipose tissue</tissue>
        <tissue>Heart</tissue>
        <tissue>Kidney</tissue>
        <tissue>Lung</tissue>
        <tissue>Spleen</tissue>
        <tissue>Testis</tissue>
    </source>
</reference>
<reference key="9">
    <citation type="journal article" date="2010" name="Dev. Cell">
        <title>The Crumbs complex couples cell density sensing to Hippo-dependent control of the TGF-beta-SMAD pathway.</title>
        <authorList>
            <person name="Varelas X."/>
            <person name="Samavarchi-Tehrani P."/>
            <person name="Narimatsu M."/>
            <person name="Weiss A."/>
            <person name="Cockburn K."/>
            <person name="Larsen B.G."/>
            <person name="Rossant J."/>
            <person name="Wrana J.L."/>
        </authorList>
    </citation>
    <scope>SUBCELLULAR LOCATION</scope>
</reference>
<reference key="10">
    <citation type="journal article" date="2010" name="Proc. Natl. Acad. Sci. U.S.A.">
        <title>Hippo signaling is a potent in vivo growth and tumor suppressor pathway in the mammalian liver.</title>
        <authorList>
            <person name="Lu L."/>
            <person name="Li Y."/>
            <person name="Kim S.M."/>
            <person name="Bossuyt W."/>
            <person name="Liu P."/>
            <person name="Qiu Q."/>
            <person name="Wang Y."/>
            <person name="Halder G."/>
            <person name="Finegold M.J."/>
            <person name="Lee J.S."/>
            <person name="Johnson R.L."/>
        </authorList>
    </citation>
    <scope>FUNCTION</scope>
    <scope>DISRUPTION PHENOTYPE</scope>
</reference>
<reference key="11">
    <citation type="journal article" date="2016" name="Genes Dev.">
        <title>DLG5 connects cell polarity and Hippo signaling protein networks by linking PAR-1 with MST1/2.</title>
        <authorList>
            <person name="Kwan J."/>
            <person name="Sczaniecka A."/>
            <person name="Arash E.H."/>
            <person name="Nguyen L."/>
            <person name="Chen C.C."/>
            <person name="Ratkovic S."/>
            <person name="Klezovitch O."/>
            <person name="Attisano L."/>
            <person name="McNeill H."/>
            <person name="Emili A."/>
            <person name="Vasioukhin V."/>
        </authorList>
    </citation>
    <scope>INTERACTION WITH DLG5</scope>
</reference>